<organism>
    <name type="scientific">Schizosaccharomyces pombe (strain 972 / ATCC 24843)</name>
    <name type="common">Fission yeast</name>
    <dbReference type="NCBI Taxonomy" id="284812"/>
    <lineage>
        <taxon>Eukaryota</taxon>
        <taxon>Fungi</taxon>
        <taxon>Dikarya</taxon>
        <taxon>Ascomycota</taxon>
        <taxon>Taphrinomycotina</taxon>
        <taxon>Schizosaccharomycetes</taxon>
        <taxon>Schizosaccharomycetales</taxon>
        <taxon>Schizosaccharomycetaceae</taxon>
        <taxon>Schizosaccharomyces</taxon>
    </lineage>
</organism>
<proteinExistence type="inferred from homology"/>
<gene>
    <name type="primary">bip1</name>
    <name type="synonym">bip</name>
    <name type="ORF">SPAC22A12.15c</name>
</gene>
<feature type="signal peptide" evidence="3">
    <location>
        <begin position="1"/>
        <end position="24"/>
    </location>
</feature>
<feature type="chain" id="PRO_0000013585" description="Endoplasmic reticulum chaperone BiP">
    <location>
        <begin position="25"/>
        <end position="663"/>
    </location>
</feature>
<feature type="region of interest" description="Nucleotide-binding (NBD)" evidence="1">
    <location>
        <begin position="131"/>
        <end position="285"/>
    </location>
</feature>
<feature type="region of interest" description="Substrate-binding (SBD)" evidence="1">
    <location>
        <begin position="404"/>
        <end position="504"/>
    </location>
</feature>
<feature type="region of interest" description="Disordered" evidence="5">
    <location>
        <begin position="639"/>
        <end position="663"/>
    </location>
</feature>
<feature type="short sequence motif" description="Prevents secretion from ER" evidence="4">
    <location>
        <begin position="660"/>
        <end position="663"/>
    </location>
</feature>
<feature type="compositionally biased region" description="Acidic residues" evidence="5">
    <location>
        <begin position="646"/>
        <end position="663"/>
    </location>
</feature>
<feature type="binding site" evidence="1">
    <location>
        <begin position="43"/>
        <end position="46"/>
    </location>
    <ligand>
        <name>ATP</name>
        <dbReference type="ChEBI" id="CHEBI:30616"/>
    </ligand>
</feature>
<feature type="binding site" evidence="1">
    <location>
        <position position="102"/>
    </location>
    <ligand>
        <name>ATP</name>
        <dbReference type="ChEBI" id="CHEBI:30616"/>
    </ligand>
</feature>
<feature type="binding site" evidence="1">
    <location>
        <begin position="232"/>
        <end position="234"/>
    </location>
    <ligand>
        <name>ATP</name>
        <dbReference type="ChEBI" id="CHEBI:30616"/>
    </ligand>
</feature>
<feature type="binding site" evidence="1">
    <location>
        <begin position="298"/>
        <end position="305"/>
    </location>
    <ligand>
        <name>ATP</name>
        <dbReference type="ChEBI" id="CHEBI:30616"/>
    </ligand>
</feature>
<feature type="binding site" evidence="1">
    <location>
        <begin position="369"/>
        <end position="372"/>
    </location>
    <ligand>
        <name>ATP</name>
        <dbReference type="ChEBI" id="CHEBI:30616"/>
    </ligand>
</feature>
<feature type="glycosylation site" description="N-linked (GlcNAc...) asparagine" evidence="3">
    <location>
        <position position="29"/>
    </location>
</feature>
<feature type="sequence conflict" description="In Ref. 1; CAA45762." evidence="6" ref="1">
    <original>A</original>
    <variation>S</variation>
    <location>
        <position position="173"/>
    </location>
</feature>
<feature type="sequence conflict" description="In Ref. 1; CAA45762." evidence="6" ref="1">
    <original>KR</original>
    <variation>NG</variation>
    <location>
        <begin position="301"/>
        <end position="302"/>
    </location>
</feature>
<feature type="sequence conflict" description="In Ref. 1; CAA45762." evidence="6" ref="1">
    <original>NMDLFKKTLK</original>
    <variation>KHGSLQEDFE</variation>
    <location>
        <begin position="336"/>
        <end position="345"/>
    </location>
</feature>
<sequence>MKKFQLFSILSYFVALFLLPMAFASGDDNSTESYGTVIGIDLGTTYSCVAVMKNGRVEIIANDQGNRITPSYVAFTEDERLVGEAAKNQAPSNPENTIFDIKRLIGRKFDEKTMAKDIKSFPFHIVNDKNRPLVEVNVGGKKKKFTPEEISAMILSKMKQTAEAYLGKPVTHAVVTVPAYFNDAQRQATKDAGTIAGLNVIRIVNEPTAAAIAYGLDKTDTEKHIVVYDLGGGTFDVSLLSIDNGVFEVLATSGDTHLGGEDFDNRVINYLARTYNRKNNVDVTKDLKAMGKLKREVEKAKRTLSSQKSVRIEIESFFNGQDFSETLSRAKFEEINMDLFKKTLKPVEQVLKDSNLKKSEIDDIVLVGGSTRIPKVQELLESFFGKKASKGINPDEAVAYGAAVQAGVLSGEEGSDNIVLLDVIPLTLGIETTGGVMTKLIGRNTPIPTRKSQIFSTAVDNQNTVLIQVYEGERTLTKDNNLLGKFDLRGIPPAPRGVPQIEVTFEVDANGVLTVSAVDKSGKGKPEKLVIKNDKGRLSEEDIERMVKEAEEFAEEDKILKERIEARNTLENYAYSLKGQFDDDEQLGGKVDPEDKQAVLDAVEDVAEWLEIHGEDASKEEFEDQRQKLDAVVHPITQKLYSEGAGDADEEDDDYFDDEADEL</sequence>
<name>BIP_SCHPO</name>
<protein>
    <recommendedName>
        <fullName evidence="6">Endoplasmic reticulum chaperone BiP</fullName>
        <ecNumber evidence="1">3.6.4.10</ecNumber>
    </recommendedName>
    <alternativeName>
        <fullName evidence="6">Immunoglobulin heavy chain-binding protein homolog</fullName>
        <shortName evidence="6">BiP</shortName>
    </alternativeName>
</protein>
<keyword id="KW-0067">ATP-binding</keyword>
<keyword id="KW-0143">Chaperone</keyword>
<keyword id="KW-0256">Endoplasmic reticulum</keyword>
<keyword id="KW-0325">Glycoprotein</keyword>
<keyword id="KW-0378">Hydrolase</keyword>
<keyword id="KW-0547">Nucleotide-binding</keyword>
<keyword id="KW-1185">Reference proteome</keyword>
<keyword id="KW-0732">Signal</keyword>
<keyword id="KW-0346">Stress response</keyword>
<reference key="1">
    <citation type="journal article" date="1992" name="EMBO J.">
        <title>Analysis of the BiP gene and identification of an ER retention signal in Schizosaccharomyces pombe.</title>
        <authorList>
            <person name="Pidoux A.L."/>
            <person name="Armstrong J."/>
        </authorList>
    </citation>
    <scope>NUCLEOTIDE SEQUENCE [GENOMIC DNA]</scope>
</reference>
<reference key="2">
    <citation type="journal article" date="2002" name="Nature">
        <title>The genome sequence of Schizosaccharomyces pombe.</title>
        <authorList>
            <person name="Wood V."/>
            <person name="Gwilliam R."/>
            <person name="Rajandream M.A."/>
            <person name="Lyne M.H."/>
            <person name="Lyne R."/>
            <person name="Stewart A."/>
            <person name="Sgouros J.G."/>
            <person name="Peat N."/>
            <person name="Hayles J."/>
            <person name="Baker S.G."/>
            <person name="Basham D."/>
            <person name="Bowman S."/>
            <person name="Brooks K."/>
            <person name="Brown D."/>
            <person name="Brown S."/>
            <person name="Chillingworth T."/>
            <person name="Churcher C.M."/>
            <person name="Collins M."/>
            <person name="Connor R."/>
            <person name="Cronin A."/>
            <person name="Davis P."/>
            <person name="Feltwell T."/>
            <person name="Fraser A."/>
            <person name="Gentles S."/>
            <person name="Goble A."/>
            <person name="Hamlin N."/>
            <person name="Harris D.E."/>
            <person name="Hidalgo J."/>
            <person name="Hodgson G."/>
            <person name="Holroyd S."/>
            <person name="Hornsby T."/>
            <person name="Howarth S."/>
            <person name="Huckle E.J."/>
            <person name="Hunt S."/>
            <person name="Jagels K."/>
            <person name="James K.D."/>
            <person name="Jones L."/>
            <person name="Jones M."/>
            <person name="Leather S."/>
            <person name="McDonald S."/>
            <person name="McLean J."/>
            <person name="Mooney P."/>
            <person name="Moule S."/>
            <person name="Mungall K.L."/>
            <person name="Murphy L.D."/>
            <person name="Niblett D."/>
            <person name="Odell C."/>
            <person name="Oliver K."/>
            <person name="O'Neil S."/>
            <person name="Pearson D."/>
            <person name="Quail M.A."/>
            <person name="Rabbinowitsch E."/>
            <person name="Rutherford K.M."/>
            <person name="Rutter S."/>
            <person name="Saunders D."/>
            <person name="Seeger K."/>
            <person name="Sharp S."/>
            <person name="Skelton J."/>
            <person name="Simmonds M.N."/>
            <person name="Squares R."/>
            <person name="Squares S."/>
            <person name="Stevens K."/>
            <person name="Taylor K."/>
            <person name="Taylor R.G."/>
            <person name="Tivey A."/>
            <person name="Walsh S.V."/>
            <person name="Warren T."/>
            <person name="Whitehead S."/>
            <person name="Woodward J.R."/>
            <person name="Volckaert G."/>
            <person name="Aert R."/>
            <person name="Robben J."/>
            <person name="Grymonprez B."/>
            <person name="Weltjens I."/>
            <person name="Vanstreels E."/>
            <person name="Rieger M."/>
            <person name="Schaefer M."/>
            <person name="Mueller-Auer S."/>
            <person name="Gabel C."/>
            <person name="Fuchs M."/>
            <person name="Duesterhoeft A."/>
            <person name="Fritzc C."/>
            <person name="Holzer E."/>
            <person name="Moestl D."/>
            <person name="Hilbert H."/>
            <person name="Borzym K."/>
            <person name="Langer I."/>
            <person name="Beck A."/>
            <person name="Lehrach H."/>
            <person name="Reinhardt R."/>
            <person name="Pohl T.M."/>
            <person name="Eger P."/>
            <person name="Zimmermann W."/>
            <person name="Wedler H."/>
            <person name="Wambutt R."/>
            <person name="Purnelle B."/>
            <person name="Goffeau A."/>
            <person name="Cadieu E."/>
            <person name="Dreano S."/>
            <person name="Gloux S."/>
            <person name="Lelaure V."/>
            <person name="Mottier S."/>
            <person name="Galibert F."/>
            <person name="Aves S.J."/>
            <person name="Xiang Z."/>
            <person name="Hunt C."/>
            <person name="Moore K."/>
            <person name="Hurst S.M."/>
            <person name="Lucas M."/>
            <person name="Rochet M."/>
            <person name="Gaillardin C."/>
            <person name="Tallada V.A."/>
            <person name="Garzon A."/>
            <person name="Thode G."/>
            <person name="Daga R.R."/>
            <person name="Cruzado L."/>
            <person name="Jimenez J."/>
            <person name="Sanchez M."/>
            <person name="del Rey F."/>
            <person name="Benito J."/>
            <person name="Dominguez A."/>
            <person name="Revuelta J.L."/>
            <person name="Moreno S."/>
            <person name="Armstrong J."/>
            <person name="Forsburg S.L."/>
            <person name="Cerutti L."/>
            <person name="Lowe T."/>
            <person name="McCombie W.R."/>
            <person name="Paulsen I."/>
            <person name="Potashkin J."/>
            <person name="Shpakovski G.V."/>
            <person name="Ussery D."/>
            <person name="Barrell B.G."/>
            <person name="Nurse P."/>
        </authorList>
    </citation>
    <scope>NUCLEOTIDE SEQUENCE [LARGE SCALE GENOMIC DNA]</scope>
    <source>
        <strain>972 / ATCC 24843</strain>
    </source>
</reference>
<evidence type="ECO:0000250" key="1">
    <source>
        <dbReference type="UniProtKB" id="P11021"/>
    </source>
</evidence>
<evidence type="ECO:0000250" key="2">
    <source>
        <dbReference type="UniProtKB" id="P16474"/>
    </source>
</evidence>
<evidence type="ECO:0000255" key="3"/>
<evidence type="ECO:0000255" key="4">
    <source>
        <dbReference type="PROSITE-ProRule" id="PRU10138"/>
    </source>
</evidence>
<evidence type="ECO:0000256" key="5">
    <source>
        <dbReference type="SAM" id="MobiDB-lite"/>
    </source>
</evidence>
<evidence type="ECO:0000305" key="6"/>
<accession>P36604</accession>
<accession>O13906</accession>
<comment type="function">
    <text evidence="2">Probably plays a role in facilitating the assembly of multimeric protein complexes inside the ER. Is required for secretory polypeptide translocation. May physically associate with SEC63 protein in the endoplasmic reticulum and this interaction may be regulated by ATP hydrolysis.</text>
</comment>
<comment type="catalytic activity">
    <reaction evidence="1">
        <text>ATP + H2O = ADP + phosphate + H(+)</text>
        <dbReference type="Rhea" id="RHEA:13065"/>
        <dbReference type="ChEBI" id="CHEBI:15377"/>
        <dbReference type="ChEBI" id="CHEBI:15378"/>
        <dbReference type="ChEBI" id="CHEBI:30616"/>
        <dbReference type="ChEBI" id="CHEBI:43474"/>
        <dbReference type="ChEBI" id="CHEBI:456216"/>
        <dbReference type="EC" id="3.6.4.10"/>
    </reaction>
</comment>
<comment type="activity regulation">
    <text evidence="1">The chaperone activity is regulated by ATP-induced allosteric coupling of the nucleotide-binding (NBD) and substrate-binding (SBD) domains. In the ADP-bound and nucleotide-free (apo) states, the two domains have little interaction. In contrast, in the ATP-bound state the two domains are tightly coupled, which results in drastically accelerated kinetics in both binding and release of polypeptide substrates. J domain-containing co-chaperones stimulate the ATPase activity and are required for efficient substrate recognition.</text>
</comment>
<comment type="subcellular location">
    <subcellularLocation>
        <location evidence="2 4">Endoplasmic reticulum lumen</location>
    </subcellularLocation>
</comment>
<comment type="PTM">
    <text>Partially N-glycosylated.</text>
</comment>
<comment type="similarity">
    <text evidence="6">Belongs to the heat shock protein 70 family.</text>
</comment>
<dbReference type="EC" id="3.6.4.10" evidence="1"/>
<dbReference type="EMBL" id="X64416">
    <property type="protein sequence ID" value="CAA45762.1"/>
    <property type="molecule type" value="Genomic_DNA"/>
</dbReference>
<dbReference type="EMBL" id="CU329670">
    <property type="protein sequence ID" value="CAB16585.1"/>
    <property type="molecule type" value="Genomic_DNA"/>
</dbReference>
<dbReference type="PIR" id="S20877">
    <property type="entry name" value="S20877"/>
</dbReference>
<dbReference type="PIR" id="T38155">
    <property type="entry name" value="T38155"/>
</dbReference>
<dbReference type="RefSeq" id="NP_593245.1">
    <property type="nucleotide sequence ID" value="NM_001018642.2"/>
</dbReference>
<dbReference type="SMR" id="P36604"/>
<dbReference type="BioGRID" id="278306">
    <property type="interactions" value="13"/>
</dbReference>
<dbReference type="ELM" id="P36604"/>
<dbReference type="FunCoup" id="P36604">
    <property type="interactions" value="568"/>
</dbReference>
<dbReference type="IntAct" id="P36604">
    <property type="interactions" value="2"/>
</dbReference>
<dbReference type="STRING" id="284812.P36604"/>
<dbReference type="GlyCosmos" id="P36604">
    <property type="glycosylation" value="1 site, No reported glycans"/>
</dbReference>
<dbReference type="iPTMnet" id="P36604"/>
<dbReference type="PaxDb" id="4896-SPAC22A12.15c.1"/>
<dbReference type="EnsemblFungi" id="SPAC22A12.15c.1">
    <property type="protein sequence ID" value="SPAC22A12.15c.1:pep"/>
    <property type="gene ID" value="SPAC22A12.15c"/>
</dbReference>
<dbReference type="GeneID" id="2541815"/>
<dbReference type="KEGG" id="spo:2541815"/>
<dbReference type="PomBase" id="SPAC22A12.15c">
    <property type="gene designation" value="bip1"/>
</dbReference>
<dbReference type="VEuPathDB" id="FungiDB:SPAC22A12.15c"/>
<dbReference type="eggNOG" id="KOG0100">
    <property type="taxonomic scope" value="Eukaryota"/>
</dbReference>
<dbReference type="HOGENOM" id="CLU_005965_2_1_1"/>
<dbReference type="InParanoid" id="P36604"/>
<dbReference type="OMA" id="VQRDIKH"/>
<dbReference type="PhylomeDB" id="P36604"/>
<dbReference type="Reactome" id="R-SPO-3371453">
    <property type="pathway name" value="Regulation of HSF1-mediated heat shock response"/>
</dbReference>
<dbReference type="PRO" id="PR:P36604"/>
<dbReference type="Proteomes" id="UP000002485">
    <property type="component" value="Chromosome I"/>
</dbReference>
<dbReference type="GO" id="GO:0099021">
    <property type="term" value="C:cortical endoplasmic reticulum lumen"/>
    <property type="evidence" value="ECO:0000314"/>
    <property type="project" value="PomBase"/>
</dbReference>
<dbReference type="GO" id="GO:0005737">
    <property type="term" value="C:cytoplasm"/>
    <property type="evidence" value="ECO:0000318"/>
    <property type="project" value="GO_Central"/>
</dbReference>
<dbReference type="GO" id="GO:0005783">
    <property type="term" value="C:endoplasmic reticulum"/>
    <property type="evidence" value="ECO:0000314"/>
    <property type="project" value="CACAO"/>
</dbReference>
<dbReference type="GO" id="GO:0034663">
    <property type="term" value="C:endoplasmic reticulum chaperone complex"/>
    <property type="evidence" value="ECO:0000318"/>
    <property type="project" value="GO_Central"/>
</dbReference>
<dbReference type="GO" id="GO:0005788">
    <property type="term" value="C:endoplasmic reticulum lumen"/>
    <property type="evidence" value="ECO:0000314"/>
    <property type="project" value="PomBase"/>
</dbReference>
<dbReference type="GO" id="GO:0016020">
    <property type="term" value="C:membrane"/>
    <property type="evidence" value="ECO:0000318"/>
    <property type="project" value="GO_Central"/>
</dbReference>
<dbReference type="GO" id="GO:0031965">
    <property type="term" value="C:nuclear membrane"/>
    <property type="evidence" value="ECO:0000314"/>
    <property type="project" value="PomBase"/>
</dbReference>
<dbReference type="GO" id="GO:0005634">
    <property type="term" value="C:nucleus"/>
    <property type="evidence" value="ECO:0000318"/>
    <property type="project" value="GO_Central"/>
</dbReference>
<dbReference type="GO" id="GO:0099020">
    <property type="term" value="C:perinuclear endoplasmic reticulum lumen"/>
    <property type="evidence" value="ECO:0000314"/>
    <property type="project" value="PomBase"/>
</dbReference>
<dbReference type="GO" id="GO:0005524">
    <property type="term" value="F:ATP binding"/>
    <property type="evidence" value="ECO:0000305"/>
    <property type="project" value="PomBase"/>
</dbReference>
<dbReference type="GO" id="GO:0016887">
    <property type="term" value="F:ATP hydrolysis activity"/>
    <property type="evidence" value="ECO:0000318"/>
    <property type="project" value="GO_Central"/>
</dbReference>
<dbReference type="GO" id="GO:0140662">
    <property type="term" value="F:ATP-dependent protein folding chaperone"/>
    <property type="evidence" value="ECO:0007669"/>
    <property type="project" value="InterPro"/>
</dbReference>
<dbReference type="GO" id="GO:0031072">
    <property type="term" value="F:heat shock protein binding"/>
    <property type="evidence" value="ECO:0000318"/>
    <property type="project" value="GO_Central"/>
</dbReference>
<dbReference type="GO" id="GO:0044183">
    <property type="term" value="F:protein folding chaperone"/>
    <property type="evidence" value="ECO:0000318"/>
    <property type="project" value="GO_Central"/>
</dbReference>
<dbReference type="GO" id="GO:0051082">
    <property type="term" value="F:unfolded protein binding"/>
    <property type="evidence" value="ECO:0000266"/>
    <property type="project" value="PomBase"/>
</dbReference>
<dbReference type="GO" id="GO:0051085">
    <property type="term" value="P:chaperone cofactor-dependent protein refolding"/>
    <property type="evidence" value="ECO:0000318"/>
    <property type="project" value="GO_Central"/>
</dbReference>
<dbReference type="GO" id="GO:0030968">
    <property type="term" value="P:endoplasmic reticulum unfolded protein response"/>
    <property type="evidence" value="ECO:0000318"/>
    <property type="project" value="GO_Central"/>
</dbReference>
<dbReference type="GO" id="GO:0036503">
    <property type="term" value="P:ERAD pathway"/>
    <property type="evidence" value="ECO:0000318"/>
    <property type="project" value="GO_Central"/>
</dbReference>
<dbReference type="GO" id="GO:0036498">
    <property type="term" value="P:IRE1-mediated unfolded protein response"/>
    <property type="evidence" value="ECO:0000315"/>
    <property type="project" value="PomBase"/>
</dbReference>
<dbReference type="GO" id="GO:0042026">
    <property type="term" value="P:protein refolding"/>
    <property type="evidence" value="ECO:0000318"/>
    <property type="project" value="GO_Central"/>
</dbReference>
<dbReference type="CDD" id="cd10241">
    <property type="entry name" value="ASKHA_NBD_HSP70_BiP"/>
    <property type="match status" value="1"/>
</dbReference>
<dbReference type="FunFam" id="1.20.1270.10:FF:000009">
    <property type="entry name" value="DnaK-type molecular chaperone BiP"/>
    <property type="match status" value="1"/>
</dbReference>
<dbReference type="FunFam" id="2.60.34.10:FF:000002">
    <property type="entry name" value="Heat shock 70 kDa"/>
    <property type="match status" value="1"/>
</dbReference>
<dbReference type="FunFam" id="3.90.640.10:FF:000002">
    <property type="entry name" value="Heat shock 70 kDa"/>
    <property type="match status" value="1"/>
</dbReference>
<dbReference type="FunFam" id="3.30.420.40:FF:000026">
    <property type="entry name" value="Heat shock protein 70"/>
    <property type="match status" value="1"/>
</dbReference>
<dbReference type="FunFam" id="3.30.30.30:FF:000005">
    <property type="entry name" value="Heat shock protein ssb1"/>
    <property type="match status" value="1"/>
</dbReference>
<dbReference type="Gene3D" id="1.20.1270.10">
    <property type="match status" value="1"/>
</dbReference>
<dbReference type="Gene3D" id="3.30.420.40">
    <property type="match status" value="2"/>
</dbReference>
<dbReference type="Gene3D" id="3.90.640.10">
    <property type="entry name" value="Actin, Chain A, domain 4"/>
    <property type="match status" value="1"/>
</dbReference>
<dbReference type="Gene3D" id="2.60.34.10">
    <property type="entry name" value="Substrate Binding Domain Of DNAk, Chain A, domain 1"/>
    <property type="match status" value="1"/>
</dbReference>
<dbReference type="InterPro" id="IPR043129">
    <property type="entry name" value="ATPase_NBD"/>
</dbReference>
<dbReference type="InterPro" id="IPR042050">
    <property type="entry name" value="BIP_NBD"/>
</dbReference>
<dbReference type="InterPro" id="IPR018181">
    <property type="entry name" value="Heat_shock_70_CS"/>
</dbReference>
<dbReference type="InterPro" id="IPR029048">
    <property type="entry name" value="HSP70_C_sf"/>
</dbReference>
<dbReference type="InterPro" id="IPR029047">
    <property type="entry name" value="HSP70_peptide-bd_sf"/>
</dbReference>
<dbReference type="InterPro" id="IPR013126">
    <property type="entry name" value="Hsp_70_fam"/>
</dbReference>
<dbReference type="NCBIfam" id="NF001413">
    <property type="entry name" value="PRK00290.1"/>
    <property type="match status" value="1"/>
</dbReference>
<dbReference type="PANTHER" id="PTHR19375">
    <property type="entry name" value="HEAT SHOCK PROTEIN 70KDA"/>
    <property type="match status" value="1"/>
</dbReference>
<dbReference type="Pfam" id="PF00012">
    <property type="entry name" value="HSP70"/>
    <property type="match status" value="1"/>
</dbReference>
<dbReference type="PRINTS" id="PR00301">
    <property type="entry name" value="HEATSHOCK70"/>
</dbReference>
<dbReference type="SUPFAM" id="SSF53067">
    <property type="entry name" value="Actin-like ATPase domain"/>
    <property type="match status" value="2"/>
</dbReference>
<dbReference type="SUPFAM" id="SSF100934">
    <property type="entry name" value="Heat shock protein 70kD (HSP70), C-terminal subdomain"/>
    <property type="match status" value="1"/>
</dbReference>
<dbReference type="SUPFAM" id="SSF100920">
    <property type="entry name" value="Heat shock protein 70kD (HSP70), peptide-binding domain"/>
    <property type="match status" value="1"/>
</dbReference>
<dbReference type="PROSITE" id="PS00014">
    <property type="entry name" value="ER_TARGET"/>
    <property type="match status" value="1"/>
</dbReference>
<dbReference type="PROSITE" id="PS00297">
    <property type="entry name" value="HSP70_1"/>
    <property type="match status" value="1"/>
</dbReference>
<dbReference type="PROSITE" id="PS00329">
    <property type="entry name" value="HSP70_2"/>
    <property type="match status" value="1"/>
</dbReference>
<dbReference type="PROSITE" id="PS01036">
    <property type="entry name" value="HSP70_3"/>
    <property type="match status" value="1"/>
</dbReference>